<reference key="1">
    <citation type="journal article" date="2001" name="Proc. Natl. Acad. Sci. U.S.A.">
        <title>Complete genome sequence of an M1 strain of Streptococcus pyogenes.</title>
        <authorList>
            <person name="Ferretti J.J."/>
            <person name="McShan W.M."/>
            <person name="Ajdic D.J."/>
            <person name="Savic D.J."/>
            <person name="Savic G."/>
            <person name="Lyon K."/>
            <person name="Primeaux C."/>
            <person name="Sezate S."/>
            <person name="Suvorov A.N."/>
            <person name="Kenton S."/>
            <person name="Lai H.S."/>
            <person name="Lin S.P."/>
            <person name="Qian Y."/>
            <person name="Jia H.G."/>
            <person name="Najar F.Z."/>
            <person name="Ren Q."/>
            <person name="Zhu H."/>
            <person name="Song L."/>
            <person name="White J."/>
            <person name="Yuan X."/>
            <person name="Clifton S.W."/>
            <person name="Roe B.A."/>
            <person name="McLaughlin R.E."/>
        </authorList>
    </citation>
    <scope>NUCLEOTIDE SEQUENCE [LARGE SCALE GENOMIC DNA]</scope>
    <source>
        <strain>ATCC 700294 / SF370 / Serotype M1</strain>
    </source>
</reference>
<reference key="2">
    <citation type="journal article" date="2005" name="J. Infect. Dis.">
        <title>Evolutionary origin and emergence of a highly successful clone of serotype M1 group A Streptococcus involved multiple horizontal gene transfer events.</title>
        <authorList>
            <person name="Sumby P."/>
            <person name="Porcella S.F."/>
            <person name="Madrigal A.G."/>
            <person name="Barbian K.D."/>
            <person name="Virtaneva K."/>
            <person name="Ricklefs S.M."/>
            <person name="Sturdevant D.E."/>
            <person name="Graham M.R."/>
            <person name="Vuopio-Varkila J."/>
            <person name="Hoe N.P."/>
            <person name="Musser J.M."/>
        </authorList>
    </citation>
    <scope>NUCLEOTIDE SEQUENCE [LARGE SCALE GENOMIC DNA]</scope>
    <source>
        <strain>ATCC BAA-947 / MGAS5005 / Serotype M1</strain>
    </source>
</reference>
<keyword id="KW-0067">ATP-binding</keyword>
<keyword id="KW-1003">Cell membrane</keyword>
<keyword id="KW-0472">Membrane</keyword>
<keyword id="KW-0547">Nucleotide-binding</keyword>
<keyword id="KW-1185">Reference proteome</keyword>
<keyword id="KW-1278">Translocase</keyword>
<keyword id="KW-0813">Transport</keyword>
<protein>
    <recommendedName>
        <fullName evidence="1">Spermidine/putrescine import ATP-binding protein PotA</fullName>
        <ecNumber evidence="1">7.6.2.11</ecNumber>
    </recommendedName>
</protein>
<evidence type="ECO:0000255" key="1">
    <source>
        <dbReference type="HAMAP-Rule" id="MF_01726"/>
    </source>
</evidence>
<sequence length="384" mass="43822">MTKPIITFNNVSKTFEDSGTQVLKNINFDLEEGKFYTLLGASGSGKSTILNIMAGLLDASSGDIYLDGERINDLPINKRDIHTVFQNYALFPHMTVFENVAFALKLKKVDKKEIAKRVKETLKMVQLEGFENRSIQKLSGGQRQRVAIARAIINQPRVVLLDEPLSALDLKLRTEMQYELRELQQRLGITFVFVTHDQEEALAMSDWIFVMNEGEIVQSGTPVDIYDEPINHFVANFIGESNIINGTMIEDYLVSFNGKEFESVDGGMRPNEPVEVVIRPEDLQITLPEEGKLQVKVDTQLFRGVHYEIIAYDELGNEWMIHSTRKAIEGEVIGLDFTPEDLHIMRLNETEEEFDARIEEYVEMDEPEDGLINAIEEERNEENL</sequence>
<name>POTA_STRP1</name>
<proteinExistence type="inferred from homology"/>
<accession>Q99ZS8</accession>
<accession>Q48YX8</accession>
<feature type="chain" id="PRO_0000286305" description="Spermidine/putrescine import ATP-binding protein PotA">
    <location>
        <begin position="1"/>
        <end position="384"/>
    </location>
</feature>
<feature type="domain" description="ABC transporter" evidence="1">
    <location>
        <begin position="6"/>
        <end position="238"/>
    </location>
</feature>
<feature type="binding site" evidence="1">
    <location>
        <begin position="40"/>
        <end position="47"/>
    </location>
    <ligand>
        <name>ATP</name>
        <dbReference type="ChEBI" id="CHEBI:30616"/>
    </ligand>
</feature>
<dbReference type="EC" id="7.6.2.11" evidence="1"/>
<dbReference type="EMBL" id="AE004092">
    <property type="protein sequence ID" value="AAK33980.1"/>
    <property type="molecule type" value="Genomic_DNA"/>
</dbReference>
<dbReference type="EMBL" id="CP000017">
    <property type="protein sequence ID" value="AAZ51444.1"/>
    <property type="molecule type" value="Genomic_DNA"/>
</dbReference>
<dbReference type="RefSeq" id="NP_269259.1">
    <property type="nucleotide sequence ID" value="NC_002737.2"/>
</dbReference>
<dbReference type="SMR" id="Q99ZS8"/>
<dbReference type="PaxDb" id="1314-HKU360_00891"/>
<dbReference type="KEGG" id="spy:SPy_1102"/>
<dbReference type="KEGG" id="spz:M5005_Spy0826"/>
<dbReference type="PATRIC" id="fig|160490.10.peg.958"/>
<dbReference type="HOGENOM" id="CLU_000604_1_1_9"/>
<dbReference type="OMA" id="HVMRFGE"/>
<dbReference type="Proteomes" id="UP000000750">
    <property type="component" value="Chromosome"/>
</dbReference>
<dbReference type="GO" id="GO:0043190">
    <property type="term" value="C:ATP-binding cassette (ABC) transporter complex"/>
    <property type="evidence" value="ECO:0007669"/>
    <property type="project" value="InterPro"/>
</dbReference>
<dbReference type="GO" id="GO:0015417">
    <property type="term" value="F:ABC-type polyamine transporter activity"/>
    <property type="evidence" value="ECO:0007669"/>
    <property type="project" value="UniProtKB-EC"/>
</dbReference>
<dbReference type="GO" id="GO:0005524">
    <property type="term" value="F:ATP binding"/>
    <property type="evidence" value="ECO:0007669"/>
    <property type="project" value="UniProtKB-KW"/>
</dbReference>
<dbReference type="GO" id="GO:0016887">
    <property type="term" value="F:ATP hydrolysis activity"/>
    <property type="evidence" value="ECO:0007669"/>
    <property type="project" value="InterPro"/>
</dbReference>
<dbReference type="FunFam" id="3.40.50.300:FF:000042">
    <property type="entry name" value="Maltose/maltodextrin ABC transporter, ATP-binding protein"/>
    <property type="match status" value="1"/>
</dbReference>
<dbReference type="Gene3D" id="2.40.50.100">
    <property type="match status" value="1"/>
</dbReference>
<dbReference type="Gene3D" id="3.40.50.300">
    <property type="entry name" value="P-loop containing nucleotide triphosphate hydrolases"/>
    <property type="match status" value="1"/>
</dbReference>
<dbReference type="InterPro" id="IPR003593">
    <property type="entry name" value="AAA+_ATPase"/>
</dbReference>
<dbReference type="InterPro" id="IPR050093">
    <property type="entry name" value="ABC_SmlMolc_Importer"/>
</dbReference>
<dbReference type="InterPro" id="IPR003439">
    <property type="entry name" value="ABC_transporter-like_ATP-bd"/>
</dbReference>
<dbReference type="InterPro" id="IPR017871">
    <property type="entry name" value="ABC_transporter-like_CS"/>
</dbReference>
<dbReference type="InterPro" id="IPR008995">
    <property type="entry name" value="Mo/tungstate-bd_C_term_dom"/>
</dbReference>
<dbReference type="InterPro" id="IPR027417">
    <property type="entry name" value="P-loop_NTPase"/>
</dbReference>
<dbReference type="InterPro" id="IPR005893">
    <property type="entry name" value="PotA-like"/>
</dbReference>
<dbReference type="InterPro" id="IPR013611">
    <property type="entry name" value="Transp-assoc_OB_typ2"/>
</dbReference>
<dbReference type="NCBIfam" id="TIGR01187">
    <property type="entry name" value="potA"/>
    <property type="match status" value="1"/>
</dbReference>
<dbReference type="PANTHER" id="PTHR42781">
    <property type="entry name" value="SPERMIDINE/PUTRESCINE IMPORT ATP-BINDING PROTEIN POTA"/>
    <property type="match status" value="1"/>
</dbReference>
<dbReference type="PANTHER" id="PTHR42781:SF4">
    <property type="entry name" value="SPERMIDINE_PUTRESCINE IMPORT ATP-BINDING PROTEIN POTA"/>
    <property type="match status" value="1"/>
</dbReference>
<dbReference type="Pfam" id="PF00005">
    <property type="entry name" value="ABC_tran"/>
    <property type="match status" value="1"/>
</dbReference>
<dbReference type="Pfam" id="PF08402">
    <property type="entry name" value="TOBE_2"/>
    <property type="match status" value="1"/>
</dbReference>
<dbReference type="SMART" id="SM00382">
    <property type="entry name" value="AAA"/>
    <property type="match status" value="1"/>
</dbReference>
<dbReference type="SUPFAM" id="SSF50331">
    <property type="entry name" value="MOP-like"/>
    <property type="match status" value="1"/>
</dbReference>
<dbReference type="SUPFAM" id="SSF52540">
    <property type="entry name" value="P-loop containing nucleoside triphosphate hydrolases"/>
    <property type="match status" value="1"/>
</dbReference>
<dbReference type="PROSITE" id="PS00211">
    <property type="entry name" value="ABC_TRANSPORTER_1"/>
    <property type="match status" value="1"/>
</dbReference>
<dbReference type="PROSITE" id="PS50893">
    <property type="entry name" value="ABC_TRANSPORTER_2"/>
    <property type="match status" value="1"/>
</dbReference>
<dbReference type="PROSITE" id="PS51305">
    <property type="entry name" value="POTA"/>
    <property type="match status" value="1"/>
</dbReference>
<comment type="function">
    <text evidence="1">Part of the ABC transporter complex PotABCD involved in spermidine/putrescine import. Responsible for energy coupling to the transport system.</text>
</comment>
<comment type="catalytic activity">
    <reaction evidence="1">
        <text>ATP + H2O + polyamine-[polyamine-binding protein]Side 1 = ADP + phosphate + polyamineSide 2 + [polyamine-binding protein]Side 1.</text>
        <dbReference type="EC" id="7.6.2.11"/>
    </reaction>
</comment>
<comment type="subunit">
    <text evidence="1">The complex is composed of two ATP-binding proteins (PotA), two transmembrane proteins (PotB and PotC) and a solute-binding protein (PotD).</text>
</comment>
<comment type="subcellular location">
    <subcellularLocation>
        <location evidence="1">Cell membrane</location>
        <topology evidence="1">Peripheral membrane protein</topology>
    </subcellularLocation>
</comment>
<comment type="similarity">
    <text evidence="1">Belongs to the ABC transporter superfamily. Spermidine/putrescine importer (TC 3.A.1.11.1) family.</text>
</comment>
<gene>
    <name evidence="1" type="primary">potA</name>
    <name type="ordered locus">SPy_1102</name>
    <name type="ordered locus">M5005_Spy0826</name>
</gene>
<organism>
    <name type="scientific">Streptococcus pyogenes serotype M1</name>
    <dbReference type="NCBI Taxonomy" id="301447"/>
    <lineage>
        <taxon>Bacteria</taxon>
        <taxon>Bacillati</taxon>
        <taxon>Bacillota</taxon>
        <taxon>Bacilli</taxon>
        <taxon>Lactobacillales</taxon>
        <taxon>Streptococcaceae</taxon>
        <taxon>Streptococcus</taxon>
    </lineage>
</organism>